<evidence type="ECO:0000255" key="1"/>
<evidence type="ECO:0000255" key="2">
    <source>
        <dbReference type="PROSITE-ProRule" id="PRU00076"/>
    </source>
</evidence>
<evidence type="ECO:0000255" key="3">
    <source>
        <dbReference type="PROSITE-ProRule" id="PRU00375"/>
    </source>
</evidence>
<evidence type="ECO:0000269" key="4">
    <source>
    </source>
</evidence>
<evidence type="ECO:0000269" key="5">
    <source>
    </source>
</evidence>
<evidence type="ECO:0000305" key="6"/>
<dbReference type="EMBL" id="GT278041">
    <property type="status" value="NOT_ANNOTATED_CDS"/>
    <property type="molecule type" value="mRNA"/>
</dbReference>
<dbReference type="EMBL" id="GT282449">
    <property type="status" value="NOT_ANNOTATED_CDS"/>
    <property type="molecule type" value="mRNA"/>
</dbReference>
<dbReference type="EMBL" id="GT284230">
    <property type="status" value="NOT_ANNOTATED_CDS"/>
    <property type="molecule type" value="mRNA"/>
</dbReference>
<dbReference type="EMBL" id="EZ420398">
    <property type="status" value="NOT_ANNOTATED_CDS"/>
    <property type="molecule type" value="mRNA"/>
</dbReference>
<dbReference type="GO" id="GO:0005576">
    <property type="term" value="C:extracellular region"/>
    <property type="evidence" value="ECO:0007669"/>
    <property type="project" value="UniProtKB-SubCell"/>
</dbReference>
<dbReference type="Gene3D" id="2.10.25.10">
    <property type="entry name" value="Laminin"/>
    <property type="match status" value="1"/>
</dbReference>
<dbReference type="InterPro" id="IPR000742">
    <property type="entry name" value="EGF-like_dom"/>
</dbReference>
<dbReference type="InterPro" id="IPR001507">
    <property type="entry name" value="ZP_dom"/>
</dbReference>
<dbReference type="PROSITE" id="PS00022">
    <property type="entry name" value="EGF_1"/>
    <property type="match status" value="2"/>
</dbReference>
<dbReference type="PROSITE" id="PS50026">
    <property type="entry name" value="EGF_3"/>
    <property type="match status" value="1"/>
</dbReference>
<dbReference type="PROSITE" id="PS51034">
    <property type="entry name" value="ZP_2"/>
    <property type="match status" value="1"/>
</dbReference>
<organism>
    <name type="scientific">Pinctada maxima</name>
    <name type="common">Silver-lipped pearl oyster</name>
    <name type="synonym">White-lipped pearl oyster</name>
    <dbReference type="NCBI Taxonomy" id="104660"/>
    <lineage>
        <taxon>Eukaryota</taxon>
        <taxon>Metazoa</taxon>
        <taxon>Spiralia</taxon>
        <taxon>Lophotrochozoa</taxon>
        <taxon>Mollusca</taxon>
        <taxon>Bivalvia</taxon>
        <taxon>Autobranchia</taxon>
        <taxon>Pteriomorphia</taxon>
        <taxon>Pterioida</taxon>
        <taxon>Pterioidea</taxon>
        <taxon>Pteriidae</taxon>
        <taxon>Pinctada</taxon>
    </lineage>
</organism>
<feature type="signal peptide" evidence="1">
    <location>
        <begin position="1"/>
        <end position="19"/>
    </location>
</feature>
<feature type="chain" id="PRO_0000413070" description="EGF-like domain-containing protein 1" evidence="1">
    <location>
        <begin position="20"/>
        <end position="348"/>
    </location>
</feature>
<feature type="domain" description="EGF-like" evidence="2">
    <location>
        <begin position="60"/>
        <end position="92"/>
    </location>
</feature>
<feature type="domain" description="ZP" evidence="3">
    <location>
        <begin position="99"/>
        <end position="342"/>
    </location>
</feature>
<feature type="disulfide bond" evidence="2">
    <location>
        <begin position="64"/>
        <end position="74"/>
    </location>
</feature>
<feature type="disulfide bond" evidence="2">
    <location>
        <begin position="68"/>
        <end position="80"/>
    </location>
</feature>
<feature type="disulfide bond" evidence="2">
    <location>
        <begin position="82"/>
        <end position="91"/>
    </location>
</feature>
<feature type="sequence conflict" description="In Ref. 1; GT278041." evidence="6" ref="1">
    <original>H</original>
    <variation>R</variation>
    <location>
        <position position="159"/>
    </location>
</feature>
<feature type="sequence conflict" description="In Ref. 1; EZ420398/GT278041." evidence="6" ref="1">
    <original>I</original>
    <variation>M</variation>
    <location>
        <position position="162"/>
    </location>
</feature>
<feature type="non-terminal residue" evidence="6">
    <location>
        <position position="348"/>
    </location>
</feature>
<comment type="subcellular location">
    <subcellularLocation>
        <location evidence="5">Secreted</location>
    </subcellularLocation>
</comment>
<comment type="tissue specificity">
    <text evidence="5">Prismatic layer of shell (at protein level). Expressed primarily in the mantle with highest level in the mantle edge and lower level in the mantle pallium.</text>
</comment>
<comment type="sequence caution" evidence="6">
    <conflict type="frameshift">
        <sequence resource="EMBL" id="GT282449"/>
    </conflict>
</comment>
<accession>P86953</accession>
<proteinExistence type="evidence at protein level"/>
<protein>
    <recommendedName>
        <fullName>EGF-like domain-containing protein 1</fullName>
    </recommendedName>
</protein>
<keyword id="KW-0903">Direct protein sequencing</keyword>
<keyword id="KW-1015">Disulfide bond</keyword>
<keyword id="KW-0245">EGF-like domain</keyword>
<keyword id="KW-0964">Secreted</keyword>
<keyword id="KW-0732">Signal</keyword>
<reference evidence="6" key="1">
    <citation type="journal article" date="2010" name="Mol. Biol. Evol.">
        <title>Parallel evolution of nacre building gene sets in molluscs.</title>
        <authorList>
            <person name="Jackson D.J."/>
            <person name="McDougall C."/>
            <person name="Woodcroft B."/>
            <person name="Moase P."/>
            <person name="Rose R.A."/>
            <person name="Kube M."/>
            <person name="Reinhardt R."/>
            <person name="Rokhsar D.S."/>
            <person name="Montagnani C."/>
            <person name="Joubert C."/>
            <person name="Piquemal D."/>
            <person name="Degnan B.M."/>
        </authorList>
    </citation>
    <scope>NUCLEOTIDE SEQUENCE [MRNA]</scope>
    <scope>IDENTIFICATION</scope>
    <source>
        <tissue evidence="4">Mantle</tissue>
    </source>
</reference>
<reference key="2">
    <citation type="journal article" date="2012" name="Proc. Natl. Acad. Sci. U.S.A.">
        <title>Different secretory repertoires control the biomineralization processes of prism and nacre deposition of the pearl oyster shell.</title>
        <authorList>
            <person name="Marie B."/>
            <person name="Joubert C."/>
            <person name="Tayale A."/>
            <person name="Zanella-Cleon I."/>
            <person name="Belliard C."/>
            <person name="Piquemal D."/>
            <person name="Cochennec-Laureau N."/>
            <person name="Marin F."/>
            <person name="Gueguen Y."/>
            <person name="Montagnani C."/>
        </authorList>
    </citation>
    <scope>PROTEIN SEQUENCE OF 32-55; 146-157 AND 187-215</scope>
    <scope>SUBCELLULAR LOCATION</scope>
    <scope>TISSUE SPECIFICITY</scope>
    <source>
        <tissue>Shell</tissue>
    </source>
</reference>
<name>ELDP1_PINMA</name>
<sequence length="348" mass="38362">MFYLSTFMTIVISLSLVSCSYDCNNPGYSCKGTCHYYGPCICNEKLMGYDCSVLKSRMSTGSNCTVTCQNNGKCYDGSKCLCSSDYTGDLCEKQTTGARCTLDAVVFEAYRPIGFVGETYLSQSRSCKLLETTSDVPGMIKFERKIFHGDTSMCGLKKHMDIPSAGDVTYEADIYSTFQYNSWGTRDFMDNVKCQYKPTRVGLSMDAPDSLFPIKMSARDGASSNVQATTQSAPISLLFSPQNIPDVKGAMVDYLEVYSINSTSKEYKSVVAVKNGCAQKNEYNVAFSNLDELDPATSKWIGLVKMQAFIIFENEPILFNYRLRFCPDRCTTPTCAAPXVGQATSAAV</sequence>